<name>HDR3_ORYSJ</name>
<comment type="function">
    <text evidence="4">Ubiquitin receptor that functions as a positive regulator of grain size and weight (PubMed:34323980). Functions in the same genetic pathway as GW6A to regulate grain size (PubMed:34323980). Modulates grain size in a similar manner to GW6A, by altering cell proliferation in spikelet hulls (PubMed:34323980). Interacts with and enhances the ubiquitination of GW6A (PubMed:34323980). This stabilizes GW6A, delays protein degradation by the 26S proteasome and enhances GW6A histone acetyltransferase activity (PubMed:34323980).</text>
</comment>
<comment type="subunit">
    <text evidence="4">Interacts (via N-terminus) with GW6A (via C-terminus).</text>
</comment>
<comment type="domain">
    <text evidence="4">The UIM domains bind molecules modified by monoubiquitin or ubiquitin chains and promote coupled monoubiquitination.</text>
</comment>
<comment type="disruption phenotype">
    <text evidence="4">Mutant plants produce grains with reduced size.</text>
</comment>
<comment type="miscellaneous">
    <text evidence="4">Plants overexpressing HDR3 produces enlarged grains.</text>
</comment>
<protein>
    <recommendedName>
        <fullName evidence="6">LIM domain-containing protein HDR3</fullName>
    </recommendedName>
    <alternativeName>
        <fullName evidence="5">Protein HOMOLOG OF DA1 ON RICE CHROMOSOME 3</fullName>
    </alternativeName>
</protein>
<feature type="chain" id="PRO_0000454921" description="LIM domain-containing protein HDR3">
    <location>
        <begin position="1"/>
        <end position="501"/>
    </location>
</feature>
<feature type="domain" description="UIM 1" evidence="2">
    <location>
        <begin position="65"/>
        <end position="84"/>
    </location>
</feature>
<feature type="domain" description="UIM 2" evidence="2">
    <location>
        <begin position="94"/>
        <end position="113"/>
    </location>
</feature>
<feature type="domain" description="LIM zinc-binding" evidence="1">
    <location>
        <begin position="131"/>
        <end position="191"/>
    </location>
</feature>
<feature type="region of interest" description="Disordered" evidence="3">
    <location>
        <begin position="33"/>
        <end position="67"/>
    </location>
</feature>
<feature type="region of interest" description="Disordered" evidence="3">
    <location>
        <begin position="429"/>
        <end position="448"/>
    </location>
</feature>
<feature type="compositionally biased region" description="Basic and acidic residues" evidence="3">
    <location>
        <begin position="53"/>
        <end position="67"/>
    </location>
</feature>
<gene>
    <name evidence="5" type="primary">HDR3</name>
    <name evidence="8" type="ordered locus">Os03g0267800</name>
    <name evidence="7" type="ordered locus">LOC_Os03g16090</name>
</gene>
<evidence type="ECO:0000255" key="1">
    <source>
        <dbReference type="PROSITE-ProRule" id="PRU00125"/>
    </source>
</evidence>
<evidence type="ECO:0000255" key="2">
    <source>
        <dbReference type="PROSITE-ProRule" id="PRU00213"/>
    </source>
</evidence>
<evidence type="ECO:0000256" key="3">
    <source>
        <dbReference type="SAM" id="MobiDB-lite"/>
    </source>
</evidence>
<evidence type="ECO:0000269" key="4">
    <source>
    </source>
</evidence>
<evidence type="ECO:0000303" key="5">
    <source>
    </source>
</evidence>
<evidence type="ECO:0000305" key="6"/>
<evidence type="ECO:0000312" key="7">
    <source>
        <dbReference type="EMBL" id="ABF95162.1"/>
    </source>
</evidence>
<evidence type="ECO:0000312" key="8">
    <source>
        <dbReference type="EMBL" id="BAS83432.1"/>
    </source>
</evidence>
<sequence>MAYSSRSCDQCSHERRSGFMKWLCAFLKGTKDGEANRRRPRVTAGEETTLWEEPVRPKKEEPPRHNNEEMDHALALALADDAKNTKERNHDKGENDEELARAIQDSLNMNPYQPYNPCAPSQTQARSRGYRVCGGCKHEIGHGHYLSCLGMYWHPQCFRCSSCRHPIREMEFTLLGTDPYHKLCYKELHHPKCDVCLQFIPTNRTGLIEYRAHPFWGQKYCPLHEHDRTPRCCSCEKMEPRNTKYMSLGDGRSLCMECLDSAIMDTGECQPLYHSIRDYYEGMNMKLDQQIPMLLVERQALNEAMEGESKGPHHMPETRGLCLSEEQTVTSILRRPRIGANRLLDMKTQPQKLTRRCEVTAILVLFGLPRLLTGSILAHELMHGWLRLKGYRNLKAEIEEGICQVMSYLWLESEILPSTSRYGQASTSYASSSSSSCRPPPSKKGGISHTEKKLGEFFLHQIANDTSSAYGDGFRAAYAAVNKYGLRQSLNHIRLTGGFPV</sequence>
<dbReference type="EMBL" id="DP000009">
    <property type="protein sequence ID" value="ABF95162.1"/>
    <property type="molecule type" value="Genomic_DNA"/>
</dbReference>
<dbReference type="EMBL" id="AP008209">
    <property type="protein sequence ID" value="BAF11582.1"/>
    <property type="molecule type" value="Genomic_DNA"/>
</dbReference>
<dbReference type="EMBL" id="AP014959">
    <property type="protein sequence ID" value="BAS83432.1"/>
    <property type="molecule type" value="Genomic_DNA"/>
</dbReference>
<dbReference type="FunCoup" id="Q10NJ6">
    <property type="interactions" value="226"/>
</dbReference>
<dbReference type="STRING" id="39947.Q10NJ6"/>
<dbReference type="PaxDb" id="39947-Q10NJ6"/>
<dbReference type="EnsemblPlants" id="Os03t0267800-01">
    <property type="protein sequence ID" value="Os03t0267800-01"/>
    <property type="gene ID" value="Os03g0267800"/>
</dbReference>
<dbReference type="Gramene" id="Os03t0267800-01">
    <property type="protein sequence ID" value="Os03t0267800-01"/>
    <property type="gene ID" value="Os03g0267800"/>
</dbReference>
<dbReference type="KEGG" id="dosa:Os03g0267800"/>
<dbReference type="KEGG" id="osa:4332368"/>
<dbReference type="eggNOG" id="KOG1703">
    <property type="taxonomic scope" value="Eukaryota"/>
</dbReference>
<dbReference type="HOGENOM" id="CLU_015906_4_0_1"/>
<dbReference type="InParanoid" id="Q10NJ6"/>
<dbReference type="OMA" id="SCFKEMT"/>
<dbReference type="OrthoDB" id="25414at2759"/>
<dbReference type="Proteomes" id="UP000000763">
    <property type="component" value="Chromosome 3"/>
</dbReference>
<dbReference type="Proteomes" id="UP000059680">
    <property type="component" value="Chromosome 3"/>
</dbReference>
<dbReference type="GO" id="GO:0046872">
    <property type="term" value="F:metal ion binding"/>
    <property type="evidence" value="ECO:0007669"/>
    <property type="project" value="UniProtKB-KW"/>
</dbReference>
<dbReference type="GO" id="GO:0043130">
    <property type="term" value="F:ubiquitin binding"/>
    <property type="evidence" value="ECO:0000318"/>
    <property type="project" value="GO_Central"/>
</dbReference>
<dbReference type="CDD" id="cd09396">
    <property type="entry name" value="LIM_DA1"/>
    <property type="match status" value="1"/>
</dbReference>
<dbReference type="FunFam" id="2.10.110.10:FF:000107">
    <property type="entry name" value="Protein DA1-related 2"/>
    <property type="match status" value="1"/>
</dbReference>
<dbReference type="Gene3D" id="2.10.110.10">
    <property type="entry name" value="Cysteine Rich Protein"/>
    <property type="match status" value="1"/>
</dbReference>
<dbReference type="InterPro" id="IPR045218">
    <property type="entry name" value="DA1-like"/>
</dbReference>
<dbReference type="InterPro" id="IPR022087">
    <property type="entry name" value="DA1-like_dom"/>
</dbReference>
<dbReference type="InterPro" id="IPR001781">
    <property type="entry name" value="Znf_LIM"/>
</dbReference>
<dbReference type="PANTHER" id="PTHR24209">
    <property type="entry name" value="PROTEIN DA1-RELATED 2"/>
    <property type="match status" value="1"/>
</dbReference>
<dbReference type="PANTHER" id="PTHR24209:SF7">
    <property type="entry name" value="PROTEIN DA1-RELATED 2"/>
    <property type="match status" value="1"/>
</dbReference>
<dbReference type="Pfam" id="PF12315">
    <property type="entry name" value="DA1-like"/>
    <property type="match status" value="1"/>
</dbReference>
<dbReference type="Pfam" id="PF00412">
    <property type="entry name" value="LIM"/>
    <property type="match status" value="1"/>
</dbReference>
<dbReference type="Pfam" id="PF23625">
    <property type="entry name" value="UIM_2"/>
    <property type="match status" value="2"/>
</dbReference>
<dbReference type="SMART" id="SM00132">
    <property type="entry name" value="LIM"/>
    <property type="match status" value="1"/>
</dbReference>
<dbReference type="SUPFAM" id="SSF57716">
    <property type="entry name" value="Glucocorticoid receptor-like (DNA-binding domain)"/>
    <property type="match status" value="2"/>
</dbReference>
<dbReference type="PROSITE" id="PS00478">
    <property type="entry name" value="LIM_DOMAIN_1"/>
    <property type="match status" value="1"/>
</dbReference>
<dbReference type="PROSITE" id="PS50023">
    <property type="entry name" value="LIM_DOMAIN_2"/>
    <property type="match status" value="1"/>
</dbReference>
<dbReference type="PROSITE" id="PS00142">
    <property type="entry name" value="ZINC_PROTEASE"/>
    <property type="match status" value="1"/>
</dbReference>
<proteinExistence type="evidence at protein level"/>
<keyword id="KW-0440">LIM domain</keyword>
<keyword id="KW-0479">Metal-binding</keyword>
<keyword id="KW-1185">Reference proteome</keyword>
<keyword id="KW-0677">Repeat</keyword>
<keyword id="KW-0862">Zinc</keyword>
<organism>
    <name type="scientific">Oryza sativa subsp. japonica</name>
    <name type="common">Rice</name>
    <dbReference type="NCBI Taxonomy" id="39947"/>
    <lineage>
        <taxon>Eukaryota</taxon>
        <taxon>Viridiplantae</taxon>
        <taxon>Streptophyta</taxon>
        <taxon>Embryophyta</taxon>
        <taxon>Tracheophyta</taxon>
        <taxon>Spermatophyta</taxon>
        <taxon>Magnoliopsida</taxon>
        <taxon>Liliopsida</taxon>
        <taxon>Poales</taxon>
        <taxon>Poaceae</taxon>
        <taxon>BOP clade</taxon>
        <taxon>Oryzoideae</taxon>
        <taxon>Oryzeae</taxon>
        <taxon>Oryzinae</taxon>
        <taxon>Oryza</taxon>
        <taxon>Oryza sativa</taxon>
    </lineage>
</organism>
<reference key="1">
    <citation type="journal article" date="2005" name="Genome Res.">
        <title>Sequence, annotation, and analysis of synteny between rice chromosome 3 and diverged grass species.</title>
        <authorList>
            <consortium name="The rice chromosome 3 sequencing consortium"/>
            <person name="Buell C.R."/>
            <person name="Yuan Q."/>
            <person name="Ouyang S."/>
            <person name="Liu J."/>
            <person name="Zhu W."/>
            <person name="Wang A."/>
            <person name="Maiti R."/>
            <person name="Haas B."/>
            <person name="Wortman J."/>
            <person name="Pertea M."/>
            <person name="Jones K.M."/>
            <person name="Kim M."/>
            <person name="Overton L."/>
            <person name="Tsitrin T."/>
            <person name="Fadrosh D."/>
            <person name="Bera J."/>
            <person name="Weaver B."/>
            <person name="Jin S."/>
            <person name="Johri S."/>
            <person name="Reardon M."/>
            <person name="Webb K."/>
            <person name="Hill J."/>
            <person name="Moffat K."/>
            <person name="Tallon L."/>
            <person name="Van Aken S."/>
            <person name="Lewis M."/>
            <person name="Utterback T."/>
            <person name="Feldblyum T."/>
            <person name="Zismann V."/>
            <person name="Iobst S."/>
            <person name="Hsiao J."/>
            <person name="de Vazeille A.R."/>
            <person name="Salzberg S.L."/>
            <person name="White O."/>
            <person name="Fraser C.M."/>
            <person name="Yu Y."/>
            <person name="Kim H."/>
            <person name="Rambo T."/>
            <person name="Currie J."/>
            <person name="Collura K."/>
            <person name="Kernodle-Thompson S."/>
            <person name="Wei F."/>
            <person name="Kudrna K."/>
            <person name="Ammiraju J.S.S."/>
            <person name="Luo M."/>
            <person name="Goicoechea J.L."/>
            <person name="Wing R.A."/>
            <person name="Henry D."/>
            <person name="Oates R."/>
            <person name="Palmer M."/>
            <person name="Pries G."/>
            <person name="Saski C."/>
            <person name="Simmons J."/>
            <person name="Soderlund C."/>
            <person name="Nelson W."/>
            <person name="de la Bastide M."/>
            <person name="Spiegel L."/>
            <person name="Nascimento L."/>
            <person name="Huang E."/>
            <person name="Preston R."/>
            <person name="Zutavern T."/>
            <person name="Palmer L."/>
            <person name="O'Shaughnessy A."/>
            <person name="Dike S."/>
            <person name="McCombie W.R."/>
            <person name="Minx P."/>
            <person name="Cordum H."/>
            <person name="Wilson R."/>
            <person name="Jin W."/>
            <person name="Lee H.R."/>
            <person name="Jiang J."/>
            <person name="Jackson S."/>
        </authorList>
    </citation>
    <scope>NUCLEOTIDE SEQUENCE [LARGE SCALE GENOMIC DNA]</scope>
    <source>
        <strain>cv. Nipponbare</strain>
    </source>
</reference>
<reference key="2">
    <citation type="journal article" date="2005" name="Nature">
        <title>The map-based sequence of the rice genome.</title>
        <authorList>
            <consortium name="International rice genome sequencing project (IRGSP)"/>
        </authorList>
    </citation>
    <scope>NUCLEOTIDE SEQUENCE [LARGE SCALE GENOMIC DNA]</scope>
    <source>
        <strain>cv. Nipponbare</strain>
    </source>
</reference>
<reference key="3">
    <citation type="journal article" date="2008" name="Nucleic Acids Res.">
        <title>The rice annotation project database (RAP-DB): 2008 update.</title>
        <authorList>
            <consortium name="The rice annotation project (RAP)"/>
        </authorList>
    </citation>
    <scope>GENOME REANNOTATION</scope>
    <source>
        <strain>cv. Nipponbare</strain>
    </source>
</reference>
<reference key="4">
    <citation type="journal article" date="2013" name="Rice">
        <title>Improvement of the Oryza sativa Nipponbare reference genome using next generation sequence and optical map data.</title>
        <authorList>
            <person name="Kawahara Y."/>
            <person name="de la Bastide M."/>
            <person name="Hamilton J.P."/>
            <person name="Kanamori H."/>
            <person name="McCombie W.R."/>
            <person name="Ouyang S."/>
            <person name="Schwartz D.C."/>
            <person name="Tanaka T."/>
            <person name="Wu J."/>
            <person name="Zhou S."/>
            <person name="Childs K.L."/>
            <person name="Davidson R.M."/>
            <person name="Lin H."/>
            <person name="Quesada-Ocampo L."/>
            <person name="Vaillancourt B."/>
            <person name="Sakai H."/>
            <person name="Lee S.S."/>
            <person name="Kim J."/>
            <person name="Numa H."/>
            <person name="Itoh T."/>
            <person name="Buell C.R."/>
            <person name="Matsumoto T."/>
        </authorList>
    </citation>
    <scope>GENOME REANNOTATION</scope>
    <source>
        <strain>cv. Nipponbare</strain>
    </source>
</reference>
<reference key="5">
    <citation type="journal article" date="2021" name="Plant Cell">
        <title>The ubiquitin-interacting motif-type ubiquitin receptor HDR3 interacts with and stabilizes the histone acetyltransferase GW6a to control the grain size in rice.</title>
        <authorList>
            <person name="Gao Q."/>
            <person name="Zhang N."/>
            <person name="Wang W.Q."/>
            <person name="Shen S.Y."/>
            <person name="Bai C."/>
            <person name="Song X.J."/>
        </authorList>
    </citation>
    <scope>FUNCTION</scope>
    <scope>INTERACTION WITH GW6A</scope>
    <scope>DOMAIN</scope>
    <scope>DISRUPTION PHENOTYPE</scope>
</reference>
<accession>Q10NJ6</accession>
<accession>Q0DT56</accession>